<keyword id="KW-0067">ATP-binding</keyword>
<keyword id="KW-0963">Cytoplasm</keyword>
<keyword id="KW-0227">DNA damage</keyword>
<keyword id="KW-0233">DNA recombination</keyword>
<keyword id="KW-0234">DNA repair</keyword>
<keyword id="KW-0238">DNA-binding</keyword>
<keyword id="KW-0547">Nucleotide-binding</keyword>
<keyword id="KW-0742">SOS response</keyword>
<accession>Q9ZFF6</accession>
<organism>
    <name type="scientific">Shigella sonnei</name>
    <dbReference type="NCBI Taxonomy" id="624"/>
    <lineage>
        <taxon>Bacteria</taxon>
        <taxon>Pseudomonadati</taxon>
        <taxon>Pseudomonadota</taxon>
        <taxon>Gammaproteobacteria</taxon>
        <taxon>Enterobacterales</taxon>
        <taxon>Enterobacteriaceae</taxon>
        <taxon>Shigella</taxon>
    </lineage>
</organism>
<dbReference type="EMBL" id="AF101227">
    <property type="protein sequence ID" value="AAC72856.1"/>
    <property type="molecule type" value="Genomic_DNA"/>
</dbReference>
<dbReference type="SMR" id="Q9ZFF6"/>
<dbReference type="STRING" id="216599.GCA_000283715_03241"/>
<dbReference type="GO" id="GO:0005829">
    <property type="term" value="C:cytosol"/>
    <property type="evidence" value="ECO:0007669"/>
    <property type="project" value="TreeGrafter"/>
</dbReference>
<dbReference type="GO" id="GO:0005524">
    <property type="term" value="F:ATP binding"/>
    <property type="evidence" value="ECO:0007669"/>
    <property type="project" value="UniProtKB-UniRule"/>
</dbReference>
<dbReference type="GO" id="GO:0016887">
    <property type="term" value="F:ATP hydrolysis activity"/>
    <property type="evidence" value="ECO:0007669"/>
    <property type="project" value="InterPro"/>
</dbReference>
<dbReference type="GO" id="GO:0140664">
    <property type="term" value="F:ATP-dependent DNA damage sensor activity"/>
    <property type="evidence" value="ECO:0007669"/>
    <property type="project" value="InterPro"/>
</dbReference>
<dbReference type="GO" id="GO:0003684">
    <property type="term" value="F:damaged DNA binding"/>
    <property type="evidence" value="ECO:0007669"/>
    <property type="project" value="UniProtKB-UniRule"/>
</dbReference>
<dbReference type="GO" id="GO:0003697">
    <property type="term" value="F:single-stranded DNA binding"/>
    <property type="evidence" value="ECO:0007669"/>
    <property type="project" value="UniProtKB-UniRule"/>
</dbReference>
<dbReference type="GO" id="GO:0006310">
    <property type="term" value="P:DNA recombination"/>
    <property type="evidence" value="ECO:0007669"/>
    <property type="project" value="UniProtKB-UniRule"/>
</dbReference>
<dbReference type="GO" id="GO:0006281">
    <property type="term" value="P:DNA repair"/>
    <property type="evidence" value="ECO:0007669"/>
    <property type="project" value="UniProtKB-UniRule"/>
</dbReference>
<dbReference type="GO" id="GO:0009432">
    <property type="term" value="P:SOS response"/>
    <property type="evidence" value="ECO:0007669"/>
    <property type="project" value="UniProtKB-UniRule"/>
</dbReference>
<dbReference type="CDD" id="cd00983">
    <property type="entry name" value="RecA"/>
    <property type="match status" value="1"/>
</dbReference>
<dbReference type="FunFam" id="3.40.50.300:FF:000087">
    <property type="entry name" value="Recombinase RecA"/>
    <property type="match status" value="1"/>
</dbReference>
<dbReference type="Gene3D" id="3.40.50.300">
    <property type="entry name" value="P-loop containing nucleotide triphosphate hydrolases"/>
    <property type="match status" value="1"/>
</dbReference>
<dbReference type="HAMAP" id="MF_00268">
    <property type="entry name" value="RecA"/>
    <property type="match status" value="1"/>
</dbReference>
<dbReference type="InterPro" id="IPR003593">
    <property type="entry name" value="AAA+_ATPase"/>
</dbReference>
<dbReference type="InterPro" id="IPR013765">
    <property type="entry name" value="DNA_recomb/repair_RecA"/>
</dbReference>
<dbReference type="InterPro" id="IPR020584">
    <property type="entry name" value="DNA_recomb/repair_RecA_CS"/>
</dbReference>
<dbReference type="InterPro" id="IPR027417">
    <property type="entry name" value="P-loop_NTPase"/>
</dbReference>
<dbReference type="InterPro" id="IPR049261">
    <property type="entry name" value="RecA-like_C"/>
</dbReference>
<dbReference type="InterPro" id="IPR049428">
    <property type="entry name" value="RecA-like_N"/>
</dbReference>
<dbReference type="InterPro" id="IPR020588">
    <property type="entry name" value="RecA_ATP-bd"/>
</dbReference>
<dbReference type="InterPro" id="IPR023400">
    <property type="entry name" value="RecA_C_sf"/>
</dbReference>
<dbReference type="InterPro" id="IPR020587">
    <property type="entry name" value="RecA_monomer-monomer_interface"/>
</dbReference>
<dbReference type="NCBIfam" id="TIGR02012">
    <property type="entry name" value="tigrfam_recA"/>
    <property type="match status" value="1"/>
</dbReference>
<dbReference type="PANTHER" id="PTHR45900:SF1">
    <property type="entry name" value="MITOCHONDRIAL DNA REPAIR PROTEIN RECA HOMOLOG-RELATED"/>
    <property type="match status" value="1"/>
</dbReference>
<dbReference type="PANTHER" id="PTHR45900">
    <property type="entry name" value="RECA"/>
    <property type="match status" value="1"/>
</dbReference>
<dbReference type="Pfam" id="PF00154">
    <property type="entry name" value="RecA"/>
    <property type="match status" value="1"/>
</dbReference>
<dbReference type="Pfam" id="PF21096">
    <property type="entry name" value="RecA_C"/>
    <property type="match status" value="1"/>
</dbReference>
<dbReference type="PRINTS" id="PR00142">
    <property type="entry name" value="RECA"/>
</dbReference>
<dbReference type="SMART" id="SM00382">
    <property type="entry name" value="AAA"/>
    <property type="match status" value="1"/>
</dbReference>
<dbReference type="SUPFAM" id="SSF52540">
    <property type="entry name" value="P-loop containing nucleoside triphosphate hydrolases"/>
    <property type="match status" value="1"/>
</dbReference>
<dbReference type="SUPFAM" id="SSF54752">
    <property type="entry name" value="RecA protein, C-terminal domain"/>
    <property type="match status" value="1"/>
</dbReference>
<dbReference type="PROSITE" id="PS00321">
    <property type="entry name" value="RECA_1"/>
    <property type="match status" value="1"/>
</dbReference>
<dbReference type="PROSITE" id="PS50162">
    <property type="entry name" value="RECA_2"/>
    <property type="match status" value="1"/>
</dbReference>
<dbReference type="PROSITE" id="PS50163">
    <property type="entry name" value="RECA_3"/>
    <property type="match status" value="1"/>
</dbReference>
<gene>
    <name evidence="2" type="primary">recA</name>
</gene>
<reference key="1">
    <citation type="submission" date="1998-10" db="EMBL/GenBank/DDBJ databases">
        <title>Cloning and nucleotide sequence of the recA gene from Shigella sonnei KNIH104S.</title>
        <authorList>
            <person name="Park Y.C."/>
            <person name="Shin H.J."/>
            <person name="Kim Y.C."/>
        </authorList>
    </citation>
    <scope>NUCLEOTIDE SEQUENCE [GENOMIC DNA]</scope>
    <source>
        <strain>KNIH104S</strain>
    </source>
</reference>
<comment type="function">
    <text evidence="2">Can catalyze the hydrolysis of ATP in the presence of single-stranded DNA, the ATP-dependent uptake of single-stranded DNA by duplex DNA, and the ATP-dependent hybridization of homologous single-stranded DNAs. It interacts with LexA causing its activation and leading to its autocatalytic cleavage.</text>
</comment>
<comment type="subcellular location">
    <subcellularLocation>
        <location evidence="2">Cytoplasm</location>
    </subcellularLocation>
</comment>
<comment type="similarity">
    <text evidence="2">Belongs to the RecA family.</text>
</comment>
<evidence type="ECO:0000250" key="1"/>
<evidence type="ECO:0000255" key="2">
    <source>
        <dbReference type="HAMAP-Rule" id="MF_00268"/>
    </source>
</evidence>
<evidence type="ECO:0000256" key="3">
    <source>
        <dbReference type="SAM" id="MobiDB-lite"/>
    </source>
</evidence>
<sequence>MAIDENKQKALAAALGQIEKQFGKGSIMRLGEDRSMDVETISTGSLSLDIALGAGGLPMGRIVEIYGPESSGKTTLTLQVIAAAQLEGKTCAFIDAEHALDPIYARKLGVDIDNLLCSQPDTGEQALEICDALARSGAVDVIVVDSVAALTPKAEIEGEIGDSHMGLAARMMSQAMRKLAGNLKQSNTLLIFINQIRMKIGVMFGNPETTTGGNALKFYASVRLDIRRIGAVKEGENVVGSETRVKVVKNKIAAPFKQAEFQILYGEGINFYGELVDLGVKEKLIEKAGAWYSYKGEKIGQGKANATAWLKDNPETAKEIEKKVRELLLSNPNSTPDFSVDDSEGVAETNEDF</sequence>
<name>RECA_SHISO</name>
<proteinExistence type="inferred from homology"/>
<feature type="initiator methionine" description="Removed" evidence="1">
    <location>
        <position position="1"/>
    </location>
</feature>
<feature type="chain" id="PRO_0000122833" description="Protein RecA">
    <location>
        <begin position="2"/>
        <end position="353"/>
    </location>
</feature>
<feature type="region of interest" description="Disordered" evidence="3">
    <location>
        <begin position="330"/>
        <end position="353"/>
    </location>
</feature>
<feature type="compositionally biased region" description="Acidic residues" evidence="3">
    <location>
        <begin position="339"/>
        <end position="353"/>
    </location>
</feature>
<feature type="binding site" evidence="2">
    <location>
        <begin position="67"/>
        <end position="74"/>
    </location>
    <ligand>
        <name>ATP</name>
        <dbReference type="ChEBI" id="CHEBI:30616"/>
    </ligand>
</feature>
<protein>
    <recommendedName>
        <fullName evidence="2">Protein RecA</fullName>
    </recommendedName>
    <alternativeName>
        <fullName evidence="2">Recombinase A</fullName>
    </alternativeName>
</protein>